<evidence type="ECO:0000250" key="1">
    <source>
        <dbReference type="UniProtKB" id="Q25619"/>
    </source>
</evidence>
<evidence type="ECO:0000255" key="2"/>
<evidence type="ECO:0000269" key="3">
    <source>
    </source>
</evidence>
<evidence type="ECO:0000269" key="4">
    <source>
    </source>
</evidence>
<evidence type="ECO:0000303" key="5">
    <source>
    </source>
</evidence>
<evidence type="ECO:0000305" key="6"/>
<evidence type="ECO:0000312" key="7">
    <source>
        <dbReference type="EMBL" id="AAB08893.1"/>
    </source>
</evidence>
<name>FAR1_BRUMA</name>
<reference evidence="7" key="1">
    <citation type="journal article" date="1999" name="Infect. Immun.">
        <title>Comparative analysis of glycosylated and nonglycosylated filarial homologues of the 20-kilodalton retinol binding protein from Onchocerca volvulus (Ov20).</title>
        <authorList>
            <person name="Nirmalan N."/>
            <person name="Cordeiro N.J.V."/>
            <person name="Klager S.L."/>
            <person name="Bradley J.E."/>
            <person name="Allen J.E."/>
        </authorList>
    </citation>
    <scope>NUCLEOTIDE SEQUENCE [MRNA]</scope>
</reference>
<reference evidence="6" key="2">
    <citation type="journal article" date="1995" name="Mol. Biochem. Parasitol.">
        <title>Characterisation of an immunodominant glycoprotein antigen of Onchocerca volvulus with homologues in other filarial nematodes and Caenorhabditis elegans.</title>
        <authorList>
            <person name="Tree T.I.M."/>
            <person name="Gillespie A.J."/>
            <person name="Shepley K.J."/>
            <person name="Blaxter M.L."/>
            <person name="Tuan R.S."/>
            <person name="Bradley J.E."/>
        </authorList>
    </citation>
    <scope>LACK OF GLYCOSYLATION</scope>
</reference>
<reference evidence="6" key="3">
    <citation type="journal article" date="2002" name="Mol. Biochem. Parasitol.">
        <title>The FAR proteins of filarial nematodes: secretion, glycosylation and lipid binding characteristics.</title>
        <authorList>
            <person name="Garofalo A."/>
            <person name="Klager S.L."/>
            <person name="Rowlinson M.C."/>
            <person name="Nirmalan N."/>
            <person name="Klion A.D."/>
            <person name="Allen J.E."/>
            <person name="Kennedy M.W."/>
            <person name="Bradley J.E."/>
        </authorList>
    </citation>
    <scope>RETINOL-BINDING AND FATTY ACID-BINDING</scope>
</reference>
<dbReference type="EMBL" id="U69169">
    <property type="protein sequence ID" value="AAB08893.1"/>
    <property type="molecule type" value="mRNA"/>
</dbReference>
<dbReference type="SMR" id="Q93142"/>
<dbReference type="FunCoup" id="Q93142">
    <property type="interactions" value="339"/>
</dbReference>
<dbReference type="STRING" id="6279.Q93142"/>
<dbReference type="InParanoid" id="Q93142"/>
<dbReference type="Proteomes" id="UP000006672">
    <property type="component" value="Unassembled WGS sequence"/>
</dbReference>
<dbReference type="GO" id="GO:0005576">
    <property type="term" value="C:extracellular region"/>
    <property type="evidence" value="ECO:0000250"/>
    <property type="project" value="UniProtKB"/>
</dbReference>
<dbReference type="GO" id="GO:0005504">
    <property type="term" value="F:fatty acid binding"/>
    <property type="evidence" value="ECO:0000314"/>
    <property type="project" value="UniProtKB"/>
</dbReference>
<dbReference type="GO" id="GO:0016918">
    <property type="term" value="F:retinal binding"/>
    <property type="evidence" value="ECO:0007669"/>
    <property type="project" value="UniProtKB-KW"/>
</dbReference>
<dbReference type="GO" id="GO:0019841">
    <property type="term" value="F:retinol binding"/>
    <property type="evidence" value="ECO:0000314"/>
    <property type="project" value="UniProtKB"/>
</dbReference>
<dbReference type="FunFam" id="1.20.120.1100:FF:000001">
    <property type="entry name" value="Fatty-acid and retinol-binding protein 1"/>
    <property type="match status" value="1"/>
</dbReference>
<dbReference type="Gene3D" id="1.20.120.1100">
    <property type="match status" value="1"/>
</dbReference>
<dbReference type="InterPro" id="IPR008632">
    <property type="entry name" value="Gp-FAR-1"/>
</dbReference>
<dbReference type="PANTHER" id="PTHR31418">
    <property type="entry name" value="FATTY-ACID AND RETINOL-BINDING PROTEIN 1"/>
    <property type="match status" value="1"/>
</dbReference>
<dbReference type="PANTHER" id="PTHR31418:SF7">
    <property type="entry name" value="FATTY-ACID AND RETINOL-BINDING PROTEIN 1"/>
    <property type="match status" value="1"/>
</dbReference>
<dbReference type="Pfam" id="PF05823">
    <property type="entry name" value="Gp-FAR-1"/>
    <property type="match status" value="1"/>
</dbReference>
<organism>
    <name type="scientific">Brugia malayi</name>
    <name type="common">Filarial nematode worm</name>
    <dbReference type="NCBI Taxonomy" id="6279"/>
    <lineage>
        <taxon>Eukaryota</taxon>
        <taxon>Metazoa</taxon>
        <taxon>Ecdysozoa</taxon>
        <taxon>Nematoda</taxon>
        <taxon>Chromadorea</taxon>
        <taxon>Rhabditida</taxon>
        <taxon>Spirurina</taxon>
        <taxon>Spiruromorpha</taxon>
        <taxon>Filarioidea</taxon>
        <taxon>Onchocercidae</taxon>
        <taxon>Brugia</taxon>
    </lineage>
</organism>
<keyword id="KW-0175">Coiled coil</keyword>
<keyword id="KW-0446">Lipid-binding</keyword>
<keyword id="KW-1185">Reference proteome</keyword>
<keyword id="KW-0683">Retinol-binding</keyword>
<keyword id="KW-0964">Secreted</keyword>
<keyword id="KW-0732">Signal</keyword>
<keyword id="KW-0845">Vitamin A</keyword>
<comment type="function">
    <text evidence="3">Binds retinol. Also binds the fluorescent fatty acid 11-((5-dimethylaminonaphthalene-1-sulfonyl)amino)undecanoic acid (DAUDA). The long chain fatty acid oleic acid can act competitively to displace bound DAUDA and retinol.</text>
</comment>
<comment type="subcellular location">
    <subcellularLocation>
        <location evidence="1">Secreted</location>
    </subcellularLocation>
</comment>
<comment type="PTM">
    <text evidence="3 4">Not glycosylated.</text>
</comment>
<comment type="similarity">
    <text evidence="3 6">Belongs to the fatty-acid and retinol-binding protein (FARBP) family.</text>
</comment>
<sequence length="178" mass="20328">MYHRLILLALVGTTMANVIPFSMSNIPEEYKEFIPEEVRNFYKDLTVEDKEILRELASKHATFANEDAALEALKDKSDKLYKNAVELRNFVKAKIDSLKPDAKIFVDEIIAKARSLRSDDGHKLDTEKIKQAARDIIAKYQALSEETKEELKVTFPAIAKIIGNEKLKRNASTFLQKN</sequence>
<gene>
    <name evidence="5" type="primary">far-1</name>
    <name evidence="7" type="synonym">bm20</name>
</gene>
<feature type="signal peptide" evidence="2">
    <location>
        <begin position="1"/>
        <end position="16"/>
    </location>
</feature>
<feature type="chain" id="PRO_0000008758" description="Fatty-acid and retinol-binding protein 1" evidence="2">
    <location>
        <begin position="17"/>
        <end position="178"/>
    </location>
</feature>
<feature type="coiled-coil region" evidence="2">
    <location>
        <begin position="67"/>
        <end position="89"/>
    </location>
</feature>
<feature type="coiled-coil region" evidence="2">
    <location>
        <begin position="130"/>
        <end position="153"/>
    </location>
</feature>
<accession>Q93142</accession>
<proteinExistence type="evidence at protein level"/>
<protein>
    <recommendedName>
        <fullName>Fatty-acid and retinol-binding protein 1</fullName>
    </recommendedName>
    <alternativeName>
        <fullName>Bm-FAR-1</fullName>
    </alternativeName>
    <alternativeName>
        <fullName>Bm20</fullName>
    </alternativeName>
</protein>